<keyword id="KW-0378">Hydrolase</keyword>
<keyword id="KW-0479">Metal-binding</keyword>
<keyword id="KW-1185">Reference proteome</keyword>
<keyword id="KW-0862">Zinc</keyword>
<name>DADD_METKA</name>
<evidence type="ECO:0000255" key="1">
    <source>
        <dbReference type="HAMAP-Rule" id="MF_01281"/>
    </source>
</evidence>
<comment type="function">
    <text evidence="1">Catalyzes the deamination of three SAM-derived enzymatic products, namely 5'-deoxyadenosine, S-adenosyl-L-homocysteine, and 5'-methylthioadenosine, to produce the inosine analogs. Can also deaminate adenosine. The preferred substrate for this enzyme is 5'-deoxyadenosine, but all these substrates are efficiently deaminated. Likely functions in a S-adenosyl-L-methionine (SAM) recycling pathway from S-adenosyl-L-homocysteine (SAH) produced from SAM-dependent methylation reactions. May also be involved in the recycling of 5'-deoxyadenosine, whereupon the 5'-deoxyribose moiety of 5'-deoxyinosine is further metabolized to deoxyhexoses used for the biosynthesis of aromatic amino acids in methanogens.</text>
</comment>
<comment type="catalytic activity">
    <reaction evidence="1">
        <text>5'-deoxyadenosine + H2O + H(+) = 5'-deoxyinosine + NH4(+)</text>
        <dbReference type="Rhea" id="RHEA:42892"/>
        <dbReference type="ChEBI" id="CHEBI:15377"/>
        <dbReference type="ChEBI" id="CHEBI:15378"/>
        <dbReference type="ChEBI" id="CHEBI:17319"/>
        <dbReference type="ChEBI" id="CHEBI:28938"/>
        <dbReference type="ChEBI" id="CHEBI:82775"/>
        <dbReference type="EC" id="3.5.4.41"/>
    </reaction>
    <physiologicalReaction direction="left-to-right" evidence="1">
        <dbReference type="Rhea" id="RHEA:42893"/>
    </physiologicalReaction>
</comment>
<comment type="catalytic activity">
    <reaction evidence="1">
        <text>S-adenosyl-L-homocysteine + H2O + H(+) = S-inosyl-L-homocysteine + NH4(+)</text>
        <dbReference type="Rhea" id="RHEA:20716"/>
        <dbReference type="ChEBI" id="CHEBI:15377"/>
        <dbReference type="ChEBI" id="CHEBI:15378"/>
        <dbReference type="ChEBI" id="CHEBI:28938"/>
        <dbReference type="ChEBI" id="CHEBI:57856"/>
        <dbReference type="ChEBI" id="CHEBI:57985"/>
        <dbReference type="EC" id="3.5.4.28"/>
    </reaction>
    <physiologicalReaction direction="left-to-right" evidence="1">
        <dbReference type="Rhea" id="RHEA:20717"/>
    </physiologicalReaction>
</comment>
<comment type="catalytic activity">
    <reaction evidence="1">
        <text>S-methyl-5'-thioadenosine + H2O + H(+) = S-methyl-5'-thioinosine + NH4(+)</text>
        <dbReference type="Rhea" id="RHEA:25025"/>
        <dbReference type="ChEBI" id="CHEBI:15377"/>
        <dbReference type="ChEBI" id="CHEBI:15378"/>
        <dbReference type="ChEBI" id="CHEBI:17509"/>
        <dbReference type="ChEBI" id="CHEBI:28938"/>
        <dbReference type="ChEBI" id="CHEBI:48595"/>
        <dbReference type="EC" id="3.5.4.31"/>
    </reaction>
    <physiologicalReaction direction="left-to-right" evidence="1">
        <dbReference type="Rhea" id="RHEA:25026"/>
    </physiologicalReaction>
</comment>
<comment type="catalytic activity">
    <reaction evidence="1">
        <text>adenosine + H2O + H(+) = inosine + NH4(+)</text>
        <dbReference type="Rhea" id="RHEA:24408"/>
        <dbReference type="ChEBI" id="CHEBI:15377"/>
        <dbReference type="ChEBI" id="CHEBI:15378"/>
        <dbReference type="ChEBI" id="CHEBI:16335"/>
        <dbReference type="ChEBI" id="CHEBI:17596"/>
        <dbReference type="ChEBI" id="CHEBI:28938"/>
        <dbReference type="EC" id="3.5.4.4"/>
    </reaction>
    <physiologicalReaction direction="left-to-right" evidence="1">
        <dbReference type="Rhea" id="RHEA:24409"/>
    </physiologicalReaction>
</comment>
<comment type="cofactor">
    <cofactor evidence="1">
        <name>Zn(2+)</name>
        <dbReference type="ChEBI" id="CHEBI:29105"/>
    </cofactor>
    <text evidence="1">Binds 1 zinc ion per subunit.</text>
</comment>
<comment type="pathway">
    <text evidence="1">Amino-acid biosynthesis; S-adenosyl-L-methionine biosynthesis.</text>
</comment>
<comment type="subunit">
    <text evidence="1">Homotetramer.</text>
</comment>
<comment type="miscellaneous">
    <text evidence="1">SAH is a product of SAM methyltransferases and is known to be a feedback inhibitor of these enzymes. As a result of this inhibition, organisms have evolved efficient enzymes to metabolize SAH via different pathways. The pathway found in methanogens differs from the canonical pathway, it uses the deamination of S-adenosyl-L-homocysteine to form S-inosyl-L-homocysteine for the regeneration of SAM from S-adenosyl-L-homocysteine. 5'-deoxyadenosine is a radical SAM enzyme reaction product which strongly inhibits radical SAM enzymes. A pathway for removing this product must be present in methanogens where the MTA/SAH nucleosidase which normally metabolizes this compound is absent.</text>
</comment>
<comment type="similarity">
    <text evidence="1">Belongs to the metallo-dependent hydrolases superfamily. MTA/SAH deaminase family.</text>
</comment>
<feature type="chain" id="PRO_0000312476" description="5'-deoxyadenosine deaminase">
    <location>
        <begin position="1"/>
        <end position="431"/>
    </location>
</feature>
<feature type="binding site" evidence="1">
    <location>
        <position position="65"/>
    </location>
    <ligand>
        <name>Zn(2+)</name>
        <dbReference type="ChEBI" id="CHEBI:29105"/>
    </ligand>
</feature>
<feature type="binding site" evidence="1">
    <location>
        <position position="67"/>
    </location>
    <ligand>
        <name>Zn(2+)</name>
        <dbReference type="ChEBI" id="CHEBI:29105"/>
    </ligand>
</feature>
<feature type="binding site" evidence="1">
    <location>
        <position position="94"/>
    </location>
    <ligand>
        <name>substrate</name>
    </ligand>
</feature>
<feature type="binding site" evidence="1">
    <location>
        <position position="185"/>
    </location>
    <ligand>
        <name>substrate</name>
    </ligand>
</feature>
<feature type="binding site" evidence="1">
    <location>
        <position position="212"/>
    </location>
    <ligand>
        <name>Zn(2+)</name>
        <dbReference type="ChEBI" id="CHEBI:29105"/>
    </ligand>
</feature>
<feature type="binding site" evidence="1">
    <location>
        <position position="215"/>
    </location>
    <ligand>
        <name>substrate</name>
    </ligand>
</feature>
<feature type="binding site" evidence="1">
    <location>
        <position position="300"/>
    </location>
    <ligand>
        <name>substrate</name>
    </ligand>
</feature>
<feature type="binding site" evidence="1">
    <location>
        <position position="300"/>
    </location>
    <ligand>
        <name>Zn(2+)</name>
        <dbReference type="ChEBI" id="CHEBI:29105"/>
    </ligand>
</feature>
<dbReference type="EC" id="3.5.4.41" evidence="1"/>
<dbReference type="EC" id="3.5.4.31" evidence="1"/>
<dbReference type="EC" id="3.5.4.4" evidence="1"/>
<dbReference type="EC" id="3.5.4.28" evidence="1"/>
<dbReference type="EMBL" id="AE009439">
    <property type="protein sequence ID" value="AAM01581.1"/>
    <property type="molecule type" value="Genomic_DNA"/>
</dbReference>
<dbReference type="RefSeq" id="WP_011018736.1">
    <property type="nucleotide sequence ID" value="NC_003551.1"/>
</dbReference>
<dbReference type="SMR" id="Q8TYD4"/>
<dbReference type="FunCoup" id="Q8TYD4">
    <property type="interactions" value="26"/>
</dbReference>
<dbReference type="STRING" id="190192.MK0366"/>
<dbReference type="PaxDb" id="190192-MK0366"/>
<dbReference type="EnsemblBacteria" id="AAM01581">
    <property type="protein sequence ID" value="AAM01581"/>
    <property type="gene ID" value="MK0366"/>
</dbReference>
<dbReference type="GeneID" id="1477669"/>
<dbReference type="KEGG" id="mka:MK0366"/>
<dbReference type="PATRIC" id="fig|190192.8.peg.388"/>
<dbReference type="HOGENOM" id="CLU_012358_2_1_2"/>
<dbReference type="InParanoid" id="Q8TYD4"/>
<dbReference type="OrthoDB" id="372084at2157"/>
<dbReference type="UniPathway" id="UPA00315"/>
<dbReference type="Proteomes" id="UP000001826">
    <property type="component" value="Chromosome"/>
</dbReference>
<dbReference type="GO" id="GO:0090613">
    <property type="term" value="F:5'-deoxyadenosine deaminase activity"/>
    <property type="evidence" value="ECO:0007669"/>
    <property type="project" value="UniProtKB-UniRule"/>
</dbReference>
<dbReference type="GO" id="GO:0090614">
    <property type="term" value="F:5'-methylthioadenosine deaminase activity"/>
    <property type="evidence" value="ECO:0007669"/>
    <property type="project" value="UniProtKB-EC"/>
</dbReference>
<dbReference type="GO" id="GO:0004000">
    <property type="term" value="F:adenosine deaminase activity"/>
    <property type="evidence" value="ECO:0007669"/>
    <property type="project" value="UniProtKB-UniRule"/>
</dbReference>
<dbReference type="GO" id="GO:0046872">
    <property type="term" value="F:metal ion binding"/>
    <property type="evidence" value="ECO:0007669"/>
    <property type="project" value="UniProtKB-KW"/>
</dbReference>
<dbReference type="GO" id="GO:0050270">
    <property type="term" value="F:S-adenosylhomocysteine deaminase activity"/>
    <property type="evidence" value="ECO:0007669"/>
    <property type="project" value="UniProtKB-EC"/>
</dbReference>
<dbReference type="GO" id="GO:0006556">
    <property type="term" value="P:S-adenosylmethionine biosynthetic process"/>
    <property type="evidence" value="ECO:0007669"/>
    <property type="project" value="UniProtKB-UniRule"/>
</dbReference>
<dbReference type="CDD" id="cd01298">
    <property type="entry name" value="ATZ_TRZ_like"/>
    <property type="match status" value="1"/>
</dbReference>
<dbReference type="FunFam" id="3.20.20.140:FF:000014">
    <property type="entry name" value="5-methylthioadenosine/S-adenosylhomocysteine deaminase"/>
    <property type="match status" value="1"/>
</dbReference>
<dbReference type="Gene3D" id="3.20.20.140">
    <property type="entry name" value="Metal-dependent hydrolases"/>
    <property type="match status" value="1"/>
</dbReference>
<dbReference type="Gene3D" id="2.30.40.10">
    <property type="entry name" value="Urease, subunit C, domain 1"/>
    <property type="match status" value="1"/>
</dbReference>
<dbReference type="HAMAP" id="MF_01281">
    <property type="entry name" value="MTA_SAH_deamin"/>
    <property type="match status" value="1"/>
</dbReference>
<dbReference type="InterPro" id="IPR006680">
    <property type="entry name" value="Amidohydro-rel"/>
</dbReference>
<dbReference type="InterPro" id="IPR023512">
    <property type="entry name" value="Deaminase_MtaD/DadD"/>
</dbReference>
<dbReference type="InterPro" id="IPR011059">
    <property type="entry name" value="Metal-dep_hydrolase_composite"/>
</dbReference>
<dbReference type="InterPro" id="IPR032466">
    <property type="entry name" value="Metal_Hydrolase"/>
</dbReference>
<dbReference type="InterPro" id="IPR050287">
    <property type="entry name" value="MTA/SAH_deaminase"/>
</dbReference>
<dbReference type="PANTHER" id="PTHR43794:SF11">
    <property type="entry name" value="AMIDOHYDROLASE-RELATED DOMAIN-CONTAINING PROTEIN"/>
    <property type="match status" value="1"/>
</dbReference>
<dbReference type="PANTHER" id="PTHR43794">
    <property type="entry name" value="AMINOHYDROLASE SSNA-RELATED"/>
    <property type="match status" value="1"/>
</dbReference>
<dbReference type="Pfam" id="PF01979">
    <property type="entry name" value="Amidohydro_1"/>
    <property type="match status" value="1"/>
</dbReference>
<dbReference type="SUPFAM" id="SSF51338">
    <property type="entry name" value="Composite domain of metallo-dependent hydrolases"/>
    <property type="match status" value="2"/>
</dbReference>
<dbReference type="SUPFAM" id="SSF51556">
    <property type="entry name" value="Metallo-dependent hydrolases"/>
    <property type="match status" value="1"/>
</dbReference>
<reference key="1">
    <citation type="journal article" date="2002" name="Proc. Natl. Acad. Sci. U.S.A.">
        <title>The complete genome of hyperthermophile Methanopyrus kandleri AV19 and monophyly of archaeal methanogens.</title>
        <authorList>
            <person name="Slesarev A.I."/>
            <person name="Mezhevaya K.V."/>
            <person name="Makarova K.S."/>
            <person name="Polushin N.N."/>
            <person name="Shcherbinina O.V."/>
            <person name="Shakhova V.V."/>
            <person name="Belova G.I."/>
            <person name="Aravind L."/>
            <person name="Natale D.A."/>
            <person name="Rogozin I.B."/>
            <person name="Tatusov R.L."/>
            <person name="Wolf Y.I."/>
            <person name="Stetter K.O."/>
            <person name="Malykh A.G."/>
            <person name="Koonin E.V."/>
            <person name="Kozyavkin S.A."/>
        </authorList>
    </citation>
    <scope>NUCLEOTIDE SEQUENCE [LARGE SCALE GENOMIC DNA]</scope>
    <source>
        <strain>AV19 / DSM 6324 / JCM 9639 / NBRC 100938</strain>
    </source>
</reference>
<gene>
    <name evidence="1" type="primary">dadD</name>
    <name type="ordered locus">MK0366</name>
</gene>
<organism>
    <name type="scientific">Methanopyrus kandleri (strain AV19 / DSM 6324 / JCM 9639 / NBRC 100938)</name>
    <dbReference type="NCBI Taxonomy" id="190192"/>
    <lineage>
        <taxon>Archaea</taxon>
        <taxon>Methanobacteriati</taxon>
        <taxon>Methanobacteriota</taxon>
        <taxon>Methanomada group</taxon>
        <taxon>Methanopyri</taxon>
        <taxon>Methanopyrales</taxon>
        <taxon>Methanopyraceae</taxon>
        <taxon>Methanopyrus</taxon>
    </lineage>
</organism>
<sequence length="431" mass="47752">MRLAILGGIAVTPERVIEDAGILIDEDGRISFVDTREQLEECEDWEDEIELGEKDVIMPGLINTHTHGPMTLFRGVADDMPLMKWLREEIWPLEERLDAEKCRWGAALAAMEALKSGTTCLADMYFFMDAVAEAYAEVGIRAVISHGMIDLGEEDKREEELKESKRVYRKCQGMEGLIEFSLGPHAPYTCSEELLKEVRRLADEWGVKIQIHVAETEDEVKEVKRKHGKRPVEYLDEIGLLGDDVIAAHCVWLDDKEIEILSKRGVIVSHNPISNMKLASGISPVPEMLERGVNVTIGTDGCASNNNLDMLEEIKVAALLHKVNKMDPSATEMLEILRMATVRAGTVFSSEKIGAIEEGYAADLVVLDGSSPRLNPNHNPISNIVYSASGSDVKHVFVAGELVVKNGKLVKADEQEILENSTECAEQLTSS</sequence>
<accession>Q8TYD4</accession>
<proteinExistence type="inferred from homology"/>
<protein>
    <recommendedName>
        <fullName evidence="1">5'-deoxyadenosine deaminase</fullName>
        <shortName evidence="1">5'-dA deaminase</shortName>
        <ecNumber evidence="1">3.5.4.41</ecNumber>
    </recommendedName>
    <alternativeName>
        <fullName evidence="1">5'-methylthioadenosine deaminase</fullName>
        <shortName evidence="1">MTA deaminase</shortName>
        <ecNumber evidence="1">3.5.4.31</ecNumber>
    </alternativeName>
    <alternativeName>
        <fullName evidence="1">Adenosine deaminase</fullName>
        <ecNumber evidence="1">3.5.4.4</ecNumber>
    </alternativeName>
    <alternativeName>
        <fullName evidence="1">S-adenosylhomocysteine deaminase</fullName>
        <shortName evidence="1">SAH deaminase</shortName>
        <ecNumber evidence="1">3.5.4.28</ecNumber>
    </alternativeName>
</protein>